<accession>P52874</accession>
<evidence type="ECO:0000255" key="1">
    <source>
        <dbReference type="HAMAP-Rule" id="MF_03035"/>
    </source>
</evidence>
<evidence type="ECO:0007829" key="2">
    <source>
        <dbReference type="PDB" id="4OHX"/>
    </source>
</evidence>
<evidence type="ECO:0007829" key="3">
    <source>
        <dbReference type="PDB" id="4OHY"/>
    </source>
</evidence>
<proteinExistence type="evidence at protein level"/>
<organism>
    <name type="scientific">Caenorhabditis elegans</name>
    <dbReference type="NCBI Taxonomy" id="6239"/>
    <lineage>
        <taxon>Eukaryota</taxon>
        <taxon>Metazoa</taxon>
        <taxon>Ecdysozoa</taxon>
        <taxon>Nematoda</taxon>
        <taxon>Chromadorea</taxon>
        <taxon>Rhabditida</taxon>
        <taxon>Rhabditina</taxon>
        <taxon>Rhabditomorpha</taxon>
        <taxon>Rhabditoidea</taxon>
        <taxon>Rhabditidae</taxon>
        <taxon>Peloderinae</taxon>
        <taxon>Caenorhabditis</taxon>
    </lineage>
</organism>
<keyword id="KW-0002">3D-structure</keyword>
<keyword id="KW-0067">ATP-binding</keyword>
<keyword id="KW-0507">mRNA processing</keyword>
<keyword id="KW-0547">Nucleotide-binding</keyword>
<keyword id="KW-0539">Nucleus</keyword>
<keyword id="KW-1185">Reference proteome</keyword>
<protein>
    <recommendedName>
        <fullName evidence="1">Protein clpf-1</fullName>
    </recommendedName>
</protein>
<sequence>MSEENVQEFVLKEDCELRFAAGDDSDVCLELVKGYAEIFGTELLLNKKYTFPAKSRVAAFTWKGATIELVGTTESAYVAESTPMVIYLNIHAAMEEVRKKREEQAAGNSNKAKGPRLLLVGPTDVGKTTVSRILCNYSVRQGRTPIFVELDVGQNSVSVPGTVAAVLVQKTADVIDGFERNQPIVFNFGHTSPSANLSLYEALFKEMATTLNAQIQENDEAKIGGMIINTCGWVDGEGYKCIVKAASAFEVDVVIVLDHERLYSDLSKELPEFVRLTHVPKSGGVEQRTGQIRSKMRGENVHRYFYGTRANNLYPFTFDVSFDDVTLCKIGAEQLPDSCLPFGMEVENHETKLVIMEPSADIKHHLFAFSRSTKADENVLKSPVFGFCLVTEVDLEKRTMSILCPQRTIPSKVLVFSDITHLDDQIKR</sequence>
<feature type="chain" id="PRO_0000065378" description="Protein clpf-1">
    <location>
        <begin position="1"/>
        <end position="428"/>
    </location>
</feature>
<feature type="binding site" evidence="1">
    <location>
        <position position="16"/>
    </location>
    <ligand>
        <name>ATP</name>
        <dbReference type="ChEBI" id="CHEBI:30616"/>
    </ligand>
</feature>
<feature type="binding site" evidence="1">
    <location>
        <position position="56"/>
    </location>
    <ligand>
        <name>ATP</name>
        <dbReference type="ChEBI" id="CHEBI:30616"/>
    </ligand>
</feature>
<feature type="binding site" evidence="1">
    <location>
        <begin position="124"/>
        <end position="129"/>
    </location>
    <ligand>
        <name>ATP</name>
        <dbReference type="ChEBI" id="CHEBI:30616"/>
    </ligand>
</feature>
<feature type="strand" evidence="2">
    <location>
        <begin position="6"/>
        <end position="11"/>
    </location>
</feature>
<feature type="strand" evidence="2">
    <location>
        <begin position="15"/>
        <end position="21"/>
    </location>
</feature>
<feature type="strand" evidence="3">
    <location>
        <begin position="23"/>
        <end position="25"/>
    </location>
</feature>
<feature type="strand" evidence="2">
    <location>
        <begin position="27"/>
        <end position="34"/>
    </location>
</feature>
<feature type="strand" evidence="2">
    <location>
        <begin position="48"/>
        <end position="51"/>
    </location>
</feature>
<feature type="strand" evidence="2">
    <location>
        <begin position="56"/>
        <end position="63"/>
    </location>
</feature>
<feature type="strand" evidence="2">
    <location>
        <begin position="65"/>
        <end position="71"/>
    </location>
</feature>
<feature type="strand" evidence="2">
    <location>
        <begin position="73"/>
        <end position="80"/>
    </location>
</feature>
<feature type="helix" evidence="2">
    <location>
        <begin position="84"/>
        <end position="103"/>
    </location>
</feature>
<feature type="strand" evidence="2">
    <location>
        <begin position="116"/>
        <end position="120"/>
    </location>
</feature>
<feature type="strand" evidence="2">
    <location>
        <begin position="122"/>
        <end position="126"/>
    </location>
</feature>
<feature type="helix" evidence="2">
    <location>
        <begin position="127"/>
        <end position="140"/>
    </location>
</feature>
<feature type="strand" evidence="2">
    <location>
        <begin position="146"/>
        <end position="149"/>
    </location>
</feature>
<feature type="strand" evidence="2">
    <location>
        <begin position="152"/>
        <end position="154"/>
    </location>
</feature>
<feature type="strand" evidence="2">
    <location>
        <begin position="156"/>
        <end position="158"/>
    </location>
</feature>
<feature type="strand" evidence="2">
    <location>
        <begin position="162"/>
        <end position="167"/>
    </location>
</feature>
<feature type="turn" evidence="2">
    <location>
        <begin position="174"/>
        <end position="176"/>
    </location>
</feature>
<feature type="strand" evidence="2">
    <location>
        <begin position="184"/>
        <end position="187"/>
    </location>
</feature>
<feature type="strand" evidence="2">
    <location>
        <begin position="190"/>
        <end position="192"/>
    </location>
</feature>
<feature type="helix" evidence="2">
    <location>
        <begin position="193"/>
        <end position="195"/>
    </location>
</feature>
<feature type="helix" evidence="2">
    <location>
        <begin position="197"/>
        <end position="214"/>
    </location>
</feature>
<feature type="helix" evidence="2">
    <location>
        <begin position="215"/>
        <end position="217"/>
    </location>
</feature>
<feature type="helix" evidence="2">
    <location>
        <begin position="219"/>
        <end position="224"/>
    </location>
</feature>
<feature type="strand" evidence="2">
    <location>
        <begin position="226"/>
        <end position="229"/>
    </location>
</feature>
<feature type="helix" evidence="2">
    <location>
        <begin position="237"/>
        <end position="248"/>
    </location>
</feature>
<feature type="strand" evidence="2">
    <location>
        <begin position="252"/>
        <end position="258"/>
    </location>
</feature>
<feature type="helix" evidence="2">
    <location>
        <begin position="260"/>
        <end position="267"/>
    </location>
</feature>
<feature type="strand" evidence="2">
    <location>
        <begin position="274"/>
        <end position="279"/>
    </location>
</feature>
<feature type="helix" evidence="2">
    <location>
        <begin position="290"/>
        <end position="306"/>
    </location>
</feature>
<feature type="strand" evidence="2">
    <location>
        <begin position="309"/>
        <end position="312"/>
    </location>
</feature>
<feature type="strand" evidence="2">
    <location>
        <begin position="316"/>
        <end position="321"/>
    </location>
</feature>
<feature type="turn" evidence="3">
    <location>
        <begin position="322"/>
        <end position="324"/>
    </location>
</feature>
<feature type="strand" evidence="2">
    <location>
        <begin position="326"/>
        <end position="330"/>
    </location>
</feature>
<feature type="strand" evidence="2">
    <location>
        <begin position="353"/>
        <end position="355"/>
    </location>
</feature>
<feature type="helix" evidence="2">
    <location>
        <begin position="360"/>
        <end position="362"/>
    </location>
</feature>
<feature type="strand" evidence="2">
    <location>
        <begin position="365"/>
        <end position="376"/>
    </location>
</feature>
<feature type="turn" evidence="2">
    <location>
        <begin position="377"/>
        <end position="381"/>
    </location>
</feature>
<feature type="strand" evidence="2">
    <location>
        <begin position="384"/>
        <end position="394"/>
    </location>
</feature>
<feature type="turn" evidence="2">
    <location>
        <begin position="395"/>
        <end position="398"/>
    </location>
</feature>
<feature type="strand" evidence="2">
    <location>
        <begin position="399"/>
        <end position="408"/>
    </location>
</feature>
<feature type="strand" evidence="2">
    <location>
        <begin position="412"/>
        <end position="420"/>
    </location>
</feature>
<gene>
    <name evidence="1" type="primary">clpf-1</name>
    <name type="ORF">F59A2.4</name>
</gene>
<dbReference type="EMBL" id="Z34801">
    <property type="protein sequence ID" value="CAA84329.1"/>
    <property type="molecule type" value="Genomic_DNA"/>
</dbReference>
<dbReference type="PIR" id="T22973">
    <property type="entry name" value="T22973"/>
</dbReference>
<dbReference type="RefSeq" id="NP_001040858.1">
    <property type="nucleotide sequence ID" value="NM_001047393.5"/>
</dbReference>
<dbReference type="PDB" id="4OHV">
    <property type="method" value="X-ray"/>
    <property type="resolution" value="2.30 A"/>
    <property type="chains" value="A=1-428"/>
</dbReference>
<dbReference type="PDB" id="4OHW">
    <property type="method" value="X-ray"/>
    <property type="resolution" value="2.30 A"/>
    <property type="chains" value="A=1-428"/>
</dbReference>
<dbReference type="PDB" id="4OHX">
    <property type="method" value="X-ray"/>
    <property type="resolution" value="1.98 A"/>
    <property type="chains" value="A=1-428"/>
</dbReference>
<dbReference type="PDB" id="4OHY">
    <property type="method" value="X-ray"/>
    <property type="resolution" value="2.00 A"/>
    <property type="chains" value="A=1-428"/>
</dbReference>
<dbReference type="PDB" id="4OHZ">
    <property type="method" value="X-ray"/>
    <property type="resolution" value="2.40 A"/>
    <property type="chains" value="A=1-428"/>
</dbReference>
<dbReference type="PDB" id="4OI0">
    <property type="method" value="X-ray"/>
    <property type="resolution" value="2.20 A"/>
    <property type="chains" value="A=1-428"/>
</dbReference>
<dbReference type="PDB" id="4OI1">
    <property type="method" value="X-ray"/>
    <property type="resolution" value="2.30 A"/>
    <property type="chains" value="A=1-428"/>
</dbReference>
<dbReference type="PDB" id="4OI2">
    <property type="method" value="X-ray"/>
    <property type="resolution" value="2.60 A"/>
    <property type="chains" value="A=1-428"/>
</dbReference>
<dbReference type="PDBsum" id="4OHV"/>
<dbReference type="PDBsum" id="4OHW"/>
<dbReference type="PDBsum" id="4OHX"/>
<dbReference type="PDBsum" id="4OHY"/>
<dbReference type="PDBsum" id="4OHZ"/>
<dbReference type="PDBsum" id="4OI0"/>
<dbReference type="PDBsum" id="4OI1"/>
<dbReference type="PDBsum" id="4OI2"/>
<dbReference type="SMR" id="P52874"/>
<dbReference type="BioGRID" id="40684">
    <property type="interactions" value="10"/>
</dbReference>
<dbReference type="DIP" id="DIP-27405N"/>
<dbReference type="FunCoup" id="P52874">
    <property type="interactions" value="2645"/>
</dbReference>
<dbReference type="IntAct" id="P52874">
    <property type="interactions" value="3"/>
</dbReference>
<dbReference type="STRING" id="6239.F59A2.4a.1"/>
<dbReference type="PaxDb" id="6239-F59A2.4a"/>
<dbReference type="PeptideAtlas" id="P52874"/>
<dbReference type="EnsemblMetazoa" id="F59A2.4a.1">
    <property type="protein sequence ID" value="F59A2.4a.1"/>
    <property type="gene ID" value="WBGene00010304"/>
</dbReference>
<dbReference type="GeneID" id="175442"/>
<dbReference type="KEGG" id="cel:CELE_F59A2.4"/>
<dbReference type="UCSC" id="F59A2.4a">
    <property type="organism name" value="c. elegans"/>
</dbReference>
<dbReference type="AGR" id="WB:WBGene00010304"/>
<dbReference type="CTD" id="175442"/>
<dbReference type="WormBase" id="F59A2.4a">
    <property type="protein sequence ID" value="CE17941"/>
    <property type="gene ID" value="WBGene00010304"/>
    <property type="gene designation" value="clpf-1"/>
</dbReference>
<dbReference type="eggNOG" id="KOG2749">
    <property type="taxonomic scope" value="Eukaryota"/>
</dbReference>
<dbReference type="HOGENOM" id="CLU_018195_1_0_1"/>
<dbReference type="InParanoid" id="P52874"/>
<dbReference type="OMA" id="VQYVNCH"/>
<dbReference type="OrthoDB" id="258143at2759"/>
<dbReference type="PhylomeDB" id="P52874"/>
<dbReference type="BRENDA" id="2.7.1.78">
    <property type="organism ID" value="1045"/>
</dbReference>
<dbReference type="Reactome" id="R-CEL-72187">
    <property type="pathway name" value="mRNA 3'-end processing"/>
</dbReference>
<dbReference type="Reactome" id="R-CEL-72203">
    <property type="pathway name" value="Processing of Capped Intron-Containing Pre-mRNA"/>
</dbReference>
<dbReference type="Reactome" id="R-CEL-73856">
    <property type="pathway name" value="RNA Polymerase II Transcription Termination"/>
</dbReference>
<dbReference type="Reactome" id="R-CEL-77595">
    <property type="pathway name" value="Processing of Intronless Pre-mRNAs"/>
</dbReference>
<dbReference type="EvolutionaryTrace" id="P52874"/>
<dbReference type="PRO" id="PR:P52874"/>
<dbReference type="Proteomes" id="UP000001940">
    <property type="component" value="Chromosome III"/>
</dbReference>
<dbReference type="Bgee" id="WBGene00010304">
    <property type="expression patterns" value="Expressed in germ line (C elegans) and 4 other cell types or tissues"/>
</dbReference>
<dbReference type="ExpressionAtlas" id="P52874">
    <property type="expression patterns" value="baseline and differential"/>
</dbReference>
<dbReference type="GO" id="GO:0005849">
    <property type="term" value="C:mRNA cleavage factor complex"/>
    <property type="evidence" value="ECO:0007669"/>
    <property type="project" value="InterPro"/>
</dbReference>
<dbReference type="GO" id="GO:0005634">
    <property type="term" value="C:nucleus"/>
    <property type="evidence" value="ECO:0000318"/>
    <property type="project" value="GO_Central"/>
</dbReference>
<dbReference type="GO" id="GO:0005524">
    <property type="term" value="F:ATP binding"/>
    <property type="evidence" value="ECO:0007669"/>
    <property type="project" value="UniProtKB-UniRule"/>
</dbReference>
<dbReference type="GO" id="GO:0051736">
    <property type="term" value="F:ATP-dependent polyribonucleotide 5'-hydroxyl-kinase activity"/>
    <property type="evidence" value="ECO:0000314"/>
    <property type="project" value="WormBase"/>
</dbReference>
<dbReference type="GO" id="GO:0051731">
    <property type="term" value="F:polynucleotide 5'-hydroxyl-kinase activity"/>
    <property type="evidence" value="ECO:0000318"/>
    <property type="project" value="GO_Central"/>
</dbReference>
<dbReference type="GO" id="GO:0031124">
    <property type="term" value="P:mRNA 3'-end processing"/>
    <property type="evidence" value="ECO:0007669"/>
    <property type="project" value="UniProtKB-UniRule"/>
</dbReference>
<dbReference type="GO" id="GO:0006388">
    <property type="term" value="P:tRNA splicing, via endonucleolytic cleavage and ligation"/>
    <property type="evidence" value="ECO:0000318"/>
    <property type="project" value="GO_Central"/>
</dbReference>
<dbReference type="FunFam" id="2.40.30.330:FF:000002">
    <property type="entry name" value="Protein CLP1 homolog"/>
    <property type="match status" value="1"/>
</dbReference>
<dbReference type="FunFam" id="3.40.50.300:FF:000454">
    <property type="entry name" value="Protein CLP1 homolog"/>
    <property type="match status" value="1"/>
</dbReference>
<dbReference type="FunFam" id="2.60.120.1030:FF:000001">
    <property type="entry name" value="Protein CLP1 homolog 5"/>
    <property type="match status" value="1"/>
</dbReference>
<dbReference type="Gene3D" id="2.60.120.1030">
    <property type="entry name" value="Clp1, DNA binding domain"/>
    <property type="match status" value="1"/>
</dbReference>
<dbReference type="Gene3D" id="3.40.50.300">
    <property type="entry name" value="P-loop containing nucleotide triphosphate hydrolases"/>
    <property type="match status" value="1"/>
</dbReference>
<dbReference type="Gene3D" id="2.40.30.330">
    <property type="entry name" value="Pre-mRNA cleavage complex subunit Clp1, C-terminal domain"/>
    <property type="match status" value="1"/>
</dbReference>
<dbReference type="HAMAP" id="MF_03035">
    <property type="entry name" value="Clp1"/>
    <property type="match status" value="1"/>
</dbReference>
<dbReference type="InterPro" id="IPR028606">
    <property type="entry name" value="Clp1"/>
</dbReference>
<dbReference type="InterPro" id="IPR045116">
    <property type="entry name" value="Clp1/Grc3"/>
</dbReference>
<dbReference type="InterPro" id="IPR010655">
    <property type="entry name" value="Clp1_C"/>
</dbReference>
<dbReference type="InterPro" id="IPR038238">
    <property type="entry name" value="Clp1_C_sf"/>
</dbReference>
<dbReference type="InterPro" id="IPR032324">
    <property type="entry name" value="Clp1_N"/>
</dbReference>
<dbReference type="InterPro" id="IPR038239">
    <property type="entry name" value="Clp1_N_sf"/>
</dbReference>
<dbReference type="InterPro" id="IPR032319">
    <property type="entry name" value="CLP1_P"/>
</dbReference>
<dbReference type="InterPro" id="IPR027417">
    <property type="entry name" value="P-loop_NTPase"/>
</dbReference>
<dbReference type="PANTHER" id="PTHR12755">
    <property type="entry name" value="CLEAVAGE/POLYADENYLATION FACTOR IA SUBUNIT CLP1P"/>
    <property type="match status" value="1"/>
</dbReference>
<dbReference type="PANTHER" id="PTHR12755:SF6">
    <property type="entry name" value="POLYRIBONUCLEOTIDE 5'-HYDROXYL-KINASE CLP1"/>
    <property type="match status" value="1"/>
</dbReference>
<dbReference type="Pfam" id="PF06807">
    <property type="entry name" value="Clp1"/>
    <property type="match status" value="1"/>
</dbReference>
<dbReference type="Pfam" id="PF16573">
    <property type="entry name" value="CLP1_N"/>
    <property type="match status" value="1"/>
</dbReference>
<dbReference type="Pfam" id="PF16575">
    <property type="entry name" value="CLP1_P"/>
    <property type="match status" value="1"/>
</dbReference>
<dbReference type="SUPFAM" id="SSF52540">
    <property type="entry name" value="P-loop containing nucleoside triphosphate hydrolases"/>
    <property type="match status" value="1"/>
</dbReference>
<reference key="1">
    <citation type="journal article" date="1998" name="Science">
        <title>Genome sequence of the nematode C. elegans: a platform for investigating biology.</title>
        <authorList>
            <consortium name="The C. elegans sequencing consortium"/>
        </authorList>
    </citation>
    <scope>NUCLEOTIDE SEQUENCE [LARGE SCALE GENOMIC DNA]</scope>
    <source>
        <strain>Bristol N2</strain>
    </source>
</reference>
<comment type="function">
    <text evidence="1">Required for endonucleolytic cleavage during polyadenylation-dependent pre-mRNA 3'-end formation.</text>
</comment>
<comment type="subcellular location">
    <subcellularLocation>
        <location evidence="1">Nucleus</location>
    </subcellularLocation>
</comment>
<comment type="similarity">
    <text evidence="1">Belongs to the Clp1 family. Clp1 subfamily.</text>
</comment>
<name>CLP1_CAEEL</name>